<name>PURT_HERAR</name>
<gene>
    <name evidence="1" type="primary">purT</name>
    <name type="ordered locus">HEAR1388</name>
</gene>
<accession>A4G4X3</accession>
<evidence type="ECO:0000255" key="1">
    <source>
        <dbReference type="HAMAP-Rule" id="MF_01643"/>
    </source>
</evidence>
<dbReference type="EC" id="6.3.1.21" evidence="1"/>
<dbReference type="EMBL" id="CU207211">
    <property type="protein sequence ID" value="CAL61560.1"/>
    <property type="molecule type" value="Genomic_DNA"/>
</dbReference>
<dbReference type="SMR" id="A4G4X3"/>
<dbReference type="STRING" id="204773.HEAR1388"/>
<dbReference type="KEGG" id="har:HEAR1388"/>
<dbReference type="eggNOG" id="COG0027">
    <property type="taxonomic scope" value="Bacteria"/>
</dbReference>
<dbReference type="HOGENOM" id="CLU_011534_1_3_4"/>
<dbReference type="OrthoDB" id="9804625at2"/>
<dbReference type="UniPathway" id="UPA00074">
    <property type="reaction ID" value="UER00127"/>
</dbReference>
<dbReference type="Proteomes" id="UP000006697">
    <property type="component" value="Chromosome"/>
</dbReference>
<dbReference type="GO" id="GO:0005829">
    <property type="term" value="C:cytosol"/>
    <property type="evidence" value="ECO:0007669"/>
    <property type="project" value="TreeGrafter"/>
</dbReference>
<dbReference type="GO" id="GO:0005524">
    <property type="term" value="F:ATP binding"/>
    <property type="evidence" value="ECO:0007669"/>
    <property type="project" value="UniProtKB-UniRule"/>
</dbReference>
<dbReference type="GO" id="GO:0000287">
    <property type="term" value="F:magnesium ion binding"/>
    <property type="evidence" value="ECO:0007669"/>
    <property type="project" value="InterPro"/>
</dbReference>
<dbReference type="GO" id="GO:0043815">
    <property type="term" value="F:phosphoribosylglycinamide formyltransferase 2 activity"/>
    <property type="evidence" value="ECO:0007669"/>
    <property type="project" value="UniProtKB-UniRule"/>
</dbReference>
<dbReference type="GO" id="GO:0004644">
    <property type="term" value="F:phosphoribosylglycinamide formyltransferase activity"/>
    <property type="evidence" value="ECO:0007669"/>
    <property type="project" value="InterPro"/>
</dbReference>
<dbReference type="GO" id="GO:0006189">
    <property type="term" value="P:'de novo' IMP biosynthetic process"/>
    <property type="evidence" value="ECO:0007669"/>
    <property type="project" value="UniProtKB-UniRule"/>
</dbReference>
<dbReference type="FunFam" id="3.30.1490.20:FF:000013">
    <property type="entry name" value="Formate-dependent phosphoribosylglycinamide formyltransferase"/>
    <property type="match status" value="1"/>
</dbReference>
<dbReference type="Gene3D" id="3.40.50.20">
    <property type="match status" value="1"/>
</dbReference>
<dbReference type="Gene3D" id="3.30.1490.20">
    <property type="entry name" value="ATP-grasp fold, A domain"/>
    <property type="match status" value="1"/>
</dbReference>
<dbReference type="Gene3D" id="3.30.470.20">
    <property type="entry name" value="ATP-grasp fold, B domain"/>
    <property type="match status" value="1"/>
</dbReference>
<dbReference type="HAMAP" id="MF_01643">
    <property type="entry name" value="PurT"/>
    <property type="match status" value="1"/>
</dbReference>
<dbReference type="InterPro" id="IPR011761">
    <property type="entry name" value="ATP-grasp"/>
</dbReference>
<dbReference type="InterPro" id="IPR003135">
    <property type="entry name" value="ATP-grasp_carboxylate-amine"/>
</dbReference>
<dbReference type="InterPro" id="IPR013815">
    <property type="entry name" value="ATP_grasp_subdomain_1"/>
</dbReference>
<dbReference type="InterPro" id="IPR016185">
    <property type="entry name" value="PreATP-grasp_dom_sf"/>
</dbReference>
<dbReference type="InterPro" id="IPR005862">
    <property type="entry name" value="PurT"/>
</dbReference>
<dbReference type="InterPro" id="IPR054350">
    <property type="entry name" value="PurT/PurK_preATP-grasp"/>
</dbReference>
<dbReference type="InterPro" id="IPR048740">
    <property type="entry name" value="PurT_C"/>
</dbReference>
<dbReference type="InterPro" id="IPR011054">
    <property type="entry name" value="Rudment_hybrid_motif"/>
</dbReference>
<dbReference type="NCBIfam" id="NF006766">
    <property type="entry name" value="PRK09288.1"/>
    <property type="match status" value="1"/>
</dbReference>
<dbReference type="NCBIfam" id="TIGR01142">
    <property type="entry name" value="purT"/>
    <property type="match status" value="1"/>
</dbReference>
<dbReference type="PANTHER" id="PTHR43055">
    <property type="entry name" value="FORMATE-DEPENDENT PHOSPHORIBOSYLGLYCINAMIDE FORMYLTRANSFERASE"/>
    <property type="match status" value="1"/>
</dbReference>
<dbReference type="PANTHER" id="PTHR43055:SF1">
    <property type="entry name" value="FORMATE-DEPENDENT PHOSPHORIBOSYLGLYCINAMIDE FORMYLTRANSFERASE"/>
    <property type="match status" value="1"/>
</dbReference>
<dbReference type="Pfam" id="PF02222">
    <property type="entry name" value="ATP-grasp"/>
    <property type="match status" value="1"/>
</dbReference>
<dbReference type="Pfam" id="PF21244">
    <property type="entry name" value="PurT_C"/>
    <property type="match status" value="1"/>
</dbReference>
<dbReference type="Pfam" id="PF22660">
    <property type="entry name" value="RS_preATP-grasp-like"/>
    <property type="match status" value="1"/>
</dbReference>
<dbReference type="SUPFAM" id="SSF56059">
    <property type="entry name" value="Glutathione synthetase ATP-binding domain-like"/>
    <property type="match status" value="1"/>
</dbReference>
<dbReference type="SUPFAM" id="SSF52440">
    <property type="entry name" value="PreATP-grasp domain"/>
    <property type="match status" value="1"/>
</dbReference>
<dbReference type="SUPFAM" id="SSF51246">
    <property type="entry name" value="Rudiment single hybrid motif"/>
    <property type="match status" value="1"/>
</dbReference>
<dbReference type="PROSITE" id="PS50975">
    <property type="entry name" value="ATP_GRASP"/>
    <property type="match status" value="1"/>
</dbReference>
<organism>
    <name type="scientific">Herminiimonas arsenicoxydans</name>
    <dbReference type="NCBI Taxonomy" id="204773"/>
    <lineage>
        <taxon>Bacteria</taxon>
        <taxon>Pseudomonadati</taxon>
        <taxon>Pseudomonadota</taxon>
        <taxon>Betaproteobacteria</taxon>
        <taxon>Burkholderiales</taxon>
        <taxon>Oxalobacteraceae</taxon>
        <taxon>Herminiimonas</taxon>
    </lineage>
</organism>
<reference key="1">
    <citation type="journal article" date="2007" name="PLoS Genet.">
        <title>A tale of two oxidation states: bacterial colonization of arsenic-rich environments.</title>
        <authorList>
            <person name="Muller D."/>
            <person name="Medigue C."/>
            <person name="Koechler S."/>
            <person name="Barbe V."/>
            <person name="Barakat M."/>
            <person name="Talla E."/>
            <person name="Bonnefoy V."/>
            <person name="Krin E."/>
            <person name="Arsene-Ploetze F."/>
            <person name="Carapito C."/>
            <person name="Chandler M."/>
            <person name="Cournoyer B."/>
            <person name="Cruveiller S."/>
            <person name="Dossat C."/>
            <person name="Duval S."/>
            <person name="Heymann M."/>
            <person name="Leize E."/>
            <person name="Lieutaud A."/>
            <person name="Lievremont D."/>
            <person name="Makita Y."/>
            <person name="Mangenot S."/>
            <person name="Nitschke W."/>
            <person name="Ortet P."/>
            <person name="Perdrial N."/>
            <person name="Schoepp B."/>
            <person name="Siguier P."/>
            <person name="Simeonova D.D."/>
            <person name="Rouy Z."/>
            <person name="Segurens B."/>
            <person name="Turlin E."/>
            <person name="Vallenet D."/>
            <person name="van Dorsselaer A."/>
            <person name="Weiss S."/>
            <person name="Weissenbach J."/>
            <person name="Lett M.-C."/>
            <person name="Danchin A."/>
            <person name="Bertin P.N."/>
        </authorList>
    </citation>
    <scope>NUCLEOTIDE SEQUENCE [LARGE SCALE GENOMIC DNA]</scope>
    <source>
        <strain>ULPAs1</strain>
    </source>
</reference>
<comment type="function">
    <text evidence="1">Involved in the de novo purine biosynthesis. Catalyzes the transfer of formate to 5-phospho-ribosyl-glycinamide (GAR), producing 5-phospho-ribosyl-N-formylglycinamide (FGAR). Formate is provided by PurU via hydrolysis of 10-formyl-tetrahydrofolate.</text>
</comment>
<comment type="catalytic activity">
    <reaction evidence="1">
        <text>N(1)-(5-phospho-beta-D-ribosyl)glycinamide + formate + ATP = N(2)-formyl-N(1)-(5-phospho-beta-D-ribosyl)glycinamide + ADP + phosphate + H(+)</text>
        <dbReference type="Rhea" id="RHEA:24829"/>
        <dbReference type="ChEBI" id="CHEBI:15378"/>
        <dbReference type="ChEBI" id="CHEBI:15740"/>
        <dbReference type="ChEBI" id="CHEBI:30616"/>
        <dbReference type="ChEBI" id="CHEBI:43474"/>
        <dbReference type="ChEBI" id="CHEBI:143788"/>
        <dbReference type="ChEBI" id="CHEBI:147286"/>
        <dbReference type="ChEBI" id="CHEBI:456216"/>
        <dbReference type="EC" id="6.3.1.21"/>
    </reaction>
    <physiologicalReaction direction="left-to-right" evidence="1">
        <dbReference type="Rhea" id="RHEA:24830"/>
    </physiologicalReaction>
</comment>
<comment type="pathway">
    <text evidence="1">Purine metabolism; IMP biosynthesis via de novo pathway; N(2)-formyl-N(1)-(5-phospho-D-ribosyl)glycinamide from N(1)-(5-phospho-D-ribosyl)glycinamide (formate route): step 1/1.</text>
</comment>
<comment type="subunit">
    <text evidence="1">Homodimer.</text>
</comment>
<comment type="similarity">
    <text evidence="1">Belongs to the PurK/PurT family.</text>
</comment>
<proteinExistence type="inferred from homology"/>
<feature type="chain" id="PRO_0000319178" description="Formate-dependent phosphoribosylglycinamide formyltransferase">
    <location>
        <begin position="1"/>
        <end position="407"/>
    </location>
</feature>
<feature type="domain" description="ATP-grasp" evidence="1">
    <location>
        <begin position="126"/>
        <end position="320"/>
    </location>
</feature>
<feature type="binding site" evidence="1">
    <location>
        <begin position="28"/>
        <end position="29"/>
    </location>
    <ligand>
        <name>N(1)-(5-phospho-beta-D-ribosyl)glycinamide</name>
        <dbReference type="ChEBI" id="CHEBI:143788"/>
    </ligand>
</feature>
<feature type="binding site" evidence="1">
    <location>
        <position position="88"/>
    </location>
    <ligand>
        <name>N(1)-(5-phospho-beta-D-ribosyl)glycinamide</name>
        <dbReference type="ChEBI" id="CHEBI:143788"/>
    </ligand>
</feature>
<feature type="binding site" evidence="1">
    <location>
        <position position="121"/>
    </location>
    <ligand>
        <name>ATP</name>
        <dbReference type="ChEBI" id="CHEBI:30616"/>
    </ligand>
</feature>
<feature type="binding site" evidence="1">
    <location>
        <position position="162"/>
    </location>
    <ligand>
        <name>ATP</name>
        <dbReference type="ChEBI" id="CHEBI:30616"/>
    </ligand>
</feature>
<feature type="binding site" evidence="1">
    <location>
        <begin position="167"/>
        <end position="172"/>
    </location>
    <ligand>
        <name>ATP</name>
        <dbReference type="ChEBI" id="CHEBI:30616"/>
    </ligand>
</feature>
<feature type="binding site" evidence="1">
    <location>
        <begin position="202"/>
        <end position="205"/>
    </location>
    <ligand>
        <name>ATP</name>
        <dbReference type="ChEBI" id="CHEBI:30616"/>
    </ligand>
</feature>
<feature type="binding site" evidence="1">
    <location>
        <position position="210"/>
    </location>
    <ligand>
        <name>ATP</name>
        <dbReference type="ChEBI" id="CHEBI:30616"/>
    </ligand>
</feature>
<feature type="binding site" evidence="1">
    <location>
        <position position="279"/>
    </location>
    <ligand>
        <name>Mg(2+)</name>
        <dbReference type="ChEBI" id="CHEBI:18420"/>
    </ligand>
</feature>
<feature type="binding site" evidence="1">
    <location>
        <position position="291"/>
    </location>
    <ligand>
        <name>Mg(2+)</name>
        <dbReference type="ChEBI" id="CHEBI:18420"/>
    </ligand>
</feature>
<feature type="binding site" evidence="1">
    <location>
        <position position="298"/>
    </location>
    <ligand>
        <name>N(1)-(5-phospho-beta-D-ribosyl)glycinamide</name>
        <dbReference type="ChEBI" id="CHEBI:143788"/>
    </ligand>
</feature>
<feature type="binding site" evidence="1">
    <location>
        <position position="367"/>
    </location>
    <ligand>
        <name>N(1)-(5-phospho-beta-D-ribosyl)glycinamide</name>
        <dbReference type="ChEBI" id="CHEBI:143788"/>
    </ligand>
</feature>
<feature type="binding site" evidence="1">
    <location>
        <begin position="374"/>
        <end position="375"/>
    </location>
    <ligand>
        <name>N(1)-(5-phospho-beta-D-ribosyl)glycinamide</name>
        <dbReference type="ChEBI" id="CHEBI:143788"/>
    </ligand>
</feature>
<keyword id="KW-0067">ATP-binding</keyword>
<keyword id="KW-0436">Ligase</keyword>
<keyword id="KW-0460">Magnesium</keyword>
<keyword id="KW-0479">Metal-binding</keyword>
<keyword id="KW-0547">Nucleotide-binding</keyword>
<keyword id="KW-0658">Purine biosynthesis</keyword>
<keyword id="KW-1185">Reference proteome</keyword>
<sequence length="407" mass="43486">MNKSNTISRIGTPLTHNATKVMLLGSGELGKEVIISLQRLGIEVIAVDRYANAPGHQVAHRAYVIDMTDGVALAALINQEKPDLVVPEIEAIATATLLEMENAGNVRVIPTARAAWLTMDREGIRRLAAEELGVATSPYRFADSLKELKAGCADIGYPCVVKPVMSSSGKGQSKLNSADDIEAAWNCAAAGGRVDTGRVIVEGFIDFDYEITLLTVRAIGADGATHTHFCEPIGHLQVNGDYVESWQPQAMHPGALQKAHDIAKKVTDNLGGLGLFGVELFVKHDMVWFSEVSPRPHDTGMVTMASQEQSEFELHAKAILGLPVNVAMKTPAASAVIYGQHDGEVVAFEGVADALRVPGTDVRLFGKPESFARRRMGVALAAAADVETARNNARTAAAKIKPVAHSR</sequence>
<protein>
    <recommendedName>
        <fullName evidence="1">Formate-dependent phosphoribosylglycinamide formyltransferase</fullName>
        <ecNumber evidence="1">6.3.1.21</ecNumber>
    </recommendedName>
    <alternativeName>
        <fullName evidence="1">5'-phosphoribosylglycinamide transformylase 2</fullName>
    </alternativeName>
    <alternativeName>
        <fullName evidence="1">Formate-dependent GAR transformylase</fullName>
    </alternativeName>
    <alternativeName>
        <fullName evidence="1">GAR transformylase 2</fullName>
        <shortName evidence="1">GART 2</shortName>
    </alternativeName>
    <alternativeName>
        <fullName evidence="1">Non-folate glycinamide ribonucleotide transformylase</fullName>
    </alternativeName>
    <alternativeName>
        <fullName evidence="1">Phosphoribosylglycinamide formyltransferase 2</fullName>
    </alternativeName>
</protein>